<organism>
    <name type="scientific">Lettuce big-vein associated virus (isolate Japan/Kagawa)</name>
    <name type="common">LBVaV</name>
    <dbReference type="NCBI Taxonomy" id="652962"/>
    <lineage>
        <taxon>Viruses</taxon>
        <taxon>Riboviria</taxon>
        <taxon>Orthornavirae</taxon>
        <taxon>Negarnaviricota</taxon>
        <taxon>Haploviricotina</taxon>
        <taxon>Monjiviricetes</taxon>
        <taxon>Mononegavirales</taxon>
        <taxon>Rhabdoviridae</taxon>
        <taxon>Betarhabdovirinae</taxon>
        <taxon>Varicosavirus</taxon>
        <taxon>Varicosavirus lactucae</taxon>
    </lineage>
</organism>
<dbReference type="EMBL" id="AB114138">
    <property type="protein sequence ID" value="BAD36833.1"/>
    <property type="molecule type" value="Genomic_RNA"/>
</dbReference>
<dbReference type="KEGG" id="vg:7042933"/>
<dbReference type="Proteomes" id="UP000008154">
    <property type="component" value="Genome"/>
</dbReference>
<name>VP4_LBVAV</name>
<sequence length="164" mass="18692">MDEENVDITEDELSVISDLELDSITRVVGTNEIKTYEDYKLEEANYLKVLDIIKKFSTSDTCECYRCELFERGDIGKFLTRSEFSKLAVLYWERCGRPRNSEALEAFIGRHICIRCAASILLSHHPVIAMRADMRLREIYIENGDKPASSSGTLFSAKGKGPRI</sequence>
<accession>Q68Y29</accession>
<feature type="chain" id="PRO_0000391477" description="Protein 4">
    <location>
        <begin position="1"/>
        <end position="164"/>
    </location>
</feature>
<organismHost>
    <name type="scientific">Lactuca sativa</name>
    <name type="common">Garden lettuce</name>
    <dbReference type="NCBI Taxonomy" id="4236"/>
</organismHost>
<organismHost>
    <name type="scientific">Sonchus asper</name>
    <name type="common">Spiny sowthistle</name>
    <name type="synonym">Sonchus oleraceus var. asper</name>
    <dbReference type="NCBI Taxonomy" id="50193"/>
</organismHost>
<organismHost>
    <name type="scientific">Sonchus oleraceus</name>
    <name type="common">Common sowthistle</name>
    <dbReference type="NCBI Taxonomy" id="50207"/>
</organismHost>
<keyword id="KW-1185">Reference proteome</keyword>
<reference key="1">
    <citation type="journal article" date="2004" name="J. Gen. Virol.">
        <title>Nucleotide sequence of RNA2 of Lettuce big-vein virus and evidence for a possible transcription termination/initiation strategy similar to that of rhabdoviruses.</title>
        <authorList>
            <person name="Sasaya T."/>
            <person name="Kusaba S."/>
            <person name="Ishikawa K."/>
            <person name="Koganezawa H."/>
        </authorList>
    </citation>
    <scope>NUCLEOTIDE SEQUENCE [GENOMIC RNA]</scope>
</reference>
<proteinExistence type="predicted"/>
<protein>
    <recommendedName>
        <fullName>Protein 4</fullName>
    </recommendedName>
</protein>